<keyword id="KW-1185">Reference proteome</keyword>
<proteinExistence type="predicted"/>
<protein>
    <recommendedName>
        <fullName>Uncharacterized protein PM0492</fullName>
    </recommendedName>
</protein>
<feature type="chain" id="PRO_0000216294" description="Uncharacterized protein PM0492">
    <location>
        <begin position="1"/>
        <end position="104"/>
    </location>
</feature>
<accession>Q9CNE0</accession>
<dbReference type="EMBL" id="AE004439">
    <property type="protein sequence ID" value="AAK02576.1"/>
    <property type="molecule type" value="Genomic_DNA"/>
</dbReference>
<dbReference type="STRING" id="272843.PM0492"/>
<dbReference type="EnsemblBacteria" id="AAK02576">
    <property type="protein sequence ID" value="AAK02576"/>
    <property type="gene ID" value="PM0492"/>
</dbReference>
<dbReference type="KEGG" id="pmu:PM0492"/>
<dbReference type="HOGENOM" id="CLU_2247442_0_0_6"/>
<dbReference type="Proteomes" id="UP000000809">
    <property type="component" value="Chromosome"/>
</dbReference>
<name>Y492_PASMU</name>
<sequence>MYVYDIPNCNEFISMYGCDCEIEEFIQTCFFHNKDKTMKLNLSFDRTINSLRIIIYHGNKICFDLYKENLKSILLDENGNFISFFLECMQIELSIYPEFSVFIR</sequence>
<gene>
    <name type="ordered locus">PM0492</name>
</gene>
<reference key="1">
    <citation type="journal article" date="2001" name="Proc. Natl. Acad. Sci. U.S.A.">
        <title>Complete genomic sequence of Pasteurella multocida Pm70.</title>
        <authorList>
            <person name="May B.J."/>
            <person name="Zhang Q."/>
            <person name="Li L.L."/>
            <person name="Paustian M.L."/>
            <person name="Whittam T.S."/>
            <person name="Kapur V."/>
        </authorList>
    </citation>
    <scope>NUCLEOTIDE SEQUENCE [LARGE SCALE GENOMIC DNA]</scope>
    <source>
        <strain>Pm70</strain>
    </source>
</reference>
<organism>
    <name type="scientific">Pasteurella multocida (strain Pm70)</name>
    <dbReference type="NCBI Taxonomy" id="272843"/>
    <lineage>
        <taxon>Bacteria</taxon>
        <taxon>Pseudomonadati</taxon>
        <taxon>Pseudomonadota</taxon>
        <taxon>Gammaproteobacteria</taxon>
        <taxon>Pasteurellales</taxon>
        <taxon>Pasteurellaceae</taxon>
        <taxon>Pasteurella</taxon>
    </lineage>
</organism>